<evidence type="ECO:0000250" key="1">
    <source>
        <dbReference type="UniProtKB" id="Q93008"/>
    </source>
</evidence>
<evidence type="ECO:0000255" key="2">
    <source>
        <dbReference type="PROSITE-ProRule" id="PRU10092"/>
    </source>
</evidence>
<evidence type="ECO:0000255" key="3">
    <source>
        <dbReference type="PROSITE-ProRule" id="PRU10093"/>
    </source>
</evidence>
<evidence type="ECO:0000256" key="4">
    <source>
        <dbReference type="SAM" id="MobiDB-lite"/>
    </source>
</evidence>
<evidence type="ECO:0000269" key="5">
    <source>
    </source>
</evidence>
<evidence type="ECO:0000269" key="6">
    <source>
    </source>
</evidence>
<evidence type="ECO:0000269" key="7">
    <source>
    </source>
</evidence>
<evidence type="ECO:0000269" key="8">
    <source>
    </source>
</evidence>
<evidence type="ECO:0000269" key="9">
    <source>
    </source>
</evidence>
<evidence type="ECO:0000303" key="10">
    <source>
    </source>
</evidence>
<evidence type="ECO:0000305" key="11"/>
<evidence type="ECO:0000305" key="12">
    <source>
    </source>
</evidence>
<evidence type="ECO:0000312" key="13">
    <source>
        <dbReference type="HGNC" id="HGNC:12633"/>
    </source>
</evidence>
<gene>
    <name evidence="10 13" type="primary">USP9Y</name>
    <name type="synonym">DFFRY</name>
</gene>
<protein>
    <recommendedName>
        <fullName>Ubiquitin carboxyl-terminal hydrolase 9Y</fullName>
        <ecNumber evidence="6">3.4.19.12</ecNumber>
    </recommendedName>
    <alternativeName>
        <fullName>Deubiquitinating enzyme FAF-Y</fullName>
    </alternativeName>
    <alternativeName>
        <fullName>Fat facets protein-related, Y-linked</fullName>
    </alternativeName>
    <alternativeName>
        <fullName>Ubiquitin thioesterase FAF-Y</fullName>
    </alternativeName>
    <alternativeName>
        <fullName>Ubiquitin-specific protease 9, Y chromosome</fullName>
    </alternativeName>
    <alternativeName>
        <fullName>Ubiquitin-specific-processing protease FAF-Y</fullName>
    </alternativeName>
</protein>
<feature type="chain" id="PRO_0000080690" description="Ubiquitin carboxyl-terminal hydrolase 9Y">
    <location>
        <begin position="1"/>
        <end position="2555"/>
    </location>
</feature>
<feature type="domain" description="USP">
    <location>
        <begin position="1559"/>
        <end position="1958"/>
    </location>
</feature>
<feature type="region of interest" description="Disordered" evidence="4">
    <location>
        <begin position="1"/>
        <end position="66"/>
    </location>
</feature>
<feature type="region of interest" description="Disordered" evidence="4">
    <location>
        <begin position="972"/>
        <end position="997"/>
    </location>
</feature>
<feature type="region of interest" description="Disordered" evidence="4">
    <location>
        <begin position="2476"/>
        <end position="2555"/>
    </location>
</feature>
<feature type="compositionally biased region" description="Polar residues" evidence="4">
    <location>
        <begin position="13"/>
        <end position="45"/>
    </location>
</feature>
<feature type="compositionally biased region" description="Low complexity" evidence="4">
    <location>
        <begin position="974"/>
        <end position="984"/>
    </location>
</feature>
<feature type="compositionally biased region" description="Acidic residues" evidence="4">
    <location>
        <begin position="2476"/>
        <end position="2485"/>
    </location>
</feature>
<feature type="compositionally biased region" description="Polar residues" evidence="4">
    <location>
        <begin position="2504"/>
        <end position="2514"/>
    </location>
</feature>
<feature type="compositionally biased region" description="Polar residues" evidence="4">
    <location>
        <begin position="2528"/>
        <end position="2555"/>
    </location>
</feature>
<feature type="active site" description="Nucleophile" evidence="2 3">
    <location>
        <position position="1568"/>
    </location>
</feature>
<feature type="active site" description="Proton acceptor" evidence="2 3">
    <location>
        <position position="1881"/>
    </location>
</feature>
<feature type="binding site" evidence="1">
    <location>
        <position position="1729"/>
    </location>
    <ligand>
        <name>Zn(2+)</name>
        <dbReference type="ChEBI" id="CHEBI:29105"/>
    </ligand>
</feature>
<feature type="binding site" evidence="1">
    <location>
        <position position="1731"/>
    </location>
    <ligand>
        <name>Zn(2+)</name>
        <dbReference type="ChEBI" id="CHEBI:29105"/>
    </ligand>
</feature>
<feature type="binding site" evidence="1">
    <location>
        <position position="1773"/>
    </location>
    <ligand>
        <name>Zn(2+)</name>
        <dbReference type="ChEBI" id="CHEBI:29105"/>
    </ligand>
</feature>
<feature type="binding site" evidence="1">
    <location>
        <position position="1776"/>
    </location>
    <ligand>
        <name>Zn(2+)</name>
        <dbReference type="ChEBI" id="CHEBI:29105"/>
    </ligand>
</feature>
<feature type="modified residue" description="Phosphoserine" evidence="1">
    <location>
        <position position="589"/>
    </location>
</feature>
<feature type="modified residue" description="Phosphothreonine" evidence="1">
    <location>
        <position position="591"/>
    </location>
</feature>
<feature type="modified residue" description="Phosphoserine" evidence="1">
    <location>
        <position position="2444"/>
    </location>
</feature>
<feature type="modified residue" description="Phosphotyrosine" evidence="1">
    <location>
        <position position="2541"/>
    </location>
</feature>
<feature type="modified residue" description="Phosphoserine" evidence="1">
    <location>
        <position position="2548"/>
    </location>
</feature>
<feature type="splice variant" id="VSP_005272" description="In isoform Short." evidence="11">
    <location>
        <begin position="2071"/>
        <end position="2555"/>
    </location>
</feature>
<feature type="sequence variant" id="VAR_055350" description="In dbSNP:rs7067496.">
    <original>E</original>
    <variation>D</variation>
    <location>
        <position position="65"/>
    </location>
</feature>
<feature type="sequence variant" id="VAR_055351" description="In dbSNP:rs2032596.">
    <original>R</original>
    <variation>C</variation>
    <location>
        <position position="211"/>
    </location>
</feature>
<feature type="sequence variant" id="VAR_029328" description="In dbSNP:rs20319.">
    <original>P</original>
    <variation>S</variation>
    <location>
        <position position="1035"/>
    </location>
</feature>
<feature type="sequence variant" id="VAR_016194" description="In dbSNP:rs20320." evidence="9">
    <original>A</original>
    <variation>T</variation>
    <location>
        <position position="1060"/>
    </location>
</feature>
<feature type="sequence variant" id="VAR_055352" description="In dbSNP:rs2032606.">
    <original>A</original>
    <variation>S</variation>
    <location>
        <position position="1705"/>
    </location>
</feature>
<feature type="sequence conflict" description="In Ref. 3; CAA73940/CAA73941." evidence="11" ref="3">
    <original>D</original>
    <variation>E</variation>
    <location>
        <position position="206"/>
    </location>
</feature>
<feature type="sequence conflict" description="In Ref. 2; AAC51833." evidence="11" ref="2">
    <original>I</original>
    <variation>M</variation>
    <location>
        <position position="282"/>
    </location>
</feature>
<feature type="sequence conflict" description="In Ref. 2; AAC51833." evidence="11" ref="2">
    <original>D</original>
    <variation>Y</variation>
    <location>
        <position position="524"/>
    </location>
</feature>
<feature type="sequence conflict" description="In Ref. 2; AAC51833." evidence="11" ref="2">
    <original>S</original>
    <variation>A</variation>
    <location>
        <position position="542"/>
    </location>
</feature>
<feature type="sequence conflict" description="In Ref. 2; AAC51833." evidence="11" ref="2">
    <original>L</original>
    <variation>V</variation>
    <location>
        <position position="666"/>
    </location>
</feature>
<feature type="sequence conflict" description="In Ref. 3; CAA73940/CAA73941." evidence="11" ref="3">
    <original>R</original>
    <variation>C</variation>
    <location>
        <position position="883"/>
    </location>
</feature>
<feature type="sequence conflict" description="In Ref. 3; CAA73940/CAA73941." evidence="11" ref="3">
    <original>S</original>
    <variation>F</variation>
    <location>
        <position position="907"/>
    </location>
</feature>
<feature type="sequence conflict" description="In Ref. 3; CAA73940/CAA73941." evidence="11" ref="3">
    <original>D</original>
    <variation>N</variation>
    <location>
        <position position="946"/>
    </location>
</feature>
<feature type="sequence conflict" description="In Ref. 3; CAA73940/CAA73941." evidence="11" ref="3">
    <original>E</original>
    <variation>K</variation>
    <location>
        <position position="1002"/>
    </location>
</feature>
<feature type="sequence conflict" description="In Ref. 3; CAA73940/CAA73941." evidence="11" ref="3">
    <original>R</original>
    <variation>K</variation>
    <location>
        <position position="1017"/>
    </location>
</feature>
<feature type="sequence conflict" description="In Ref. 3; CAA73940/CAA73941." evidence="11" ref="3">
    <original>VAD</original>
    <variation>FAN</variation>
    <location>
        <begin position="1025"/>
        <end position="1027"/>
    </location>
</feature>
<feature type="sequence conflict" description="In Ref. 3; CAA73940/CAA73941." evidence="11" ref="3">
    <original>RD</original>
    <variation>KN</variation>
    <location>
        <begin position="1038"/>
        <end position="1039"/>
    </location>
</feature>
<feature type="sequence conflict" description="In Ref. 3; CAA73940/CAA73941." evidence="11" ref="3">
    <original>K</original>
    <variation>N</variation>
    <location>
        <position position="1067"/>
    </location>
</feature>
<feature type="sequence conflict" description="In Ref. 3; CAA73940/CAA73941." evidence="11" ref="3">
    <original>V</original>
    <variation>F</variation>
    <location>
        <position position="1258"/>
    </location>
</feature>
<feature type="sequence conflict" description="In Ref. 3; CAA73940/CAA73941." evidence="11" ref="3">
    <original>Y</original>
    <variation>F</variation>
    <location>
        <position position="1733"/>
    </location>
</feature>
<feature type="sequence conflict" description="In Ref. 3; CAA73940/CAA73941." evidence="11" ref="3">
    <original>L</original>
    <variation>P</variation>
    <location>
        <position position="1953"/>
    </location>
</feature>
<feature type="sequence conflict" description="In Ref. 2; AAC51833." evidence="11" ref="2">
    <original>R</original>
    <variation>G</variation>
    <location>
        <position position="2086"/>
    </location>
</feature>
<keyword id="KW-0025">Alternative splicing</keyword>
<keyword id="KW-0378">Hydrolase</keyword>
<keyword id="KW-0479">Metal-binding</keyword>
<keyword id="KW-0597">Phosphoprotein</keyword>
<keyword id="KW-0645">Protease</keyword>
<keyword id="KW-1267">Proteomics identification</keyword>
<keyword id="KW-1185">Reference proteome</keyword>
<keyword id="KW-0788">Thiol protease</keyword>
<keyword id="KW-0833">Ubl conjugation pathway</keyword>
<keyword id="KW-0862">Zinc</keyword>
<reference key="1">
    <citation type="journal article" date="1996" name="Hum. Mol. Genet.">
        <title>The Drosophila developmental gene fat facets has a human homologue in Xp11.4 which escapes X-inactivation and has related sequences on Yq11.2.</title>
        <authorList>
            <person name="Jones M.H."/>
            <person name="Furlong R.A."/>
            <person name="Burkin H."/>
            <person name="Chalmers I.J."/>
            <person name="Brown G.M."/>
            <person name="Khwaja O."/>
            <person name="Affara N.A."/>
        </authorList>
    </citation>
    <scope>NUCLEOTIDE SEQUENCE [MRNA]</scope>
    <scope>TISSUE SPECIFICITY</scope>
    <source>
        <tissue>Testis</tissue>
    </source>
</reference>
<reference key="2">
    <citation type="journal article" date="1997" name="Science">
        <title>Functional coherence of the human Y chromosome.</title>
        <authorList>
            <person name="Lahn B.T."/>
            <person name="Page D.C."/>
        </authorList>
    </citation>
    <scope>NUCLEOTIDE SEQUENCE [MRNA]</scope>
</reference>
<reference key="3">
    <citation type="journal article" date="1998" name="Hum. Mol. Genet.">
        <title>Characterisation of the coding sequence and fine mapping of the human DFFRY gene and comparative expression analysis and mapping to the Sxrb interval of the mouse Y chromosome of the Dffry gene.</title>
        <authorList>
            <person name="Brown G.M."/>
            <person name="Furlong R.A."/>
            <person name="Sargent C.A."/>
            <person name="Erickson R.P."/>
            <person name="Longepied G."/>
            <person name="Mitchell M."/>
            <person name="Jones M.H."/>
            <person name="Hargreave T.B."/>
            <person name="Cooke H.J."/>
            <person name="Affara N.A."/>
        </authorList>
    </citation>
    <scope>NUCLEOTIDE SEQUENCE [MRNA]</scope>
    <scope>GENE MAPPING</scope>
    <scope>VARIANT THR-1060</scope>
    <source>
        <tissue>Fetal brain</tissue>
        <tissue>Retina</tissue>
        <tissue>Testis</tissue>
    </source>
</reference>
<reference key="4">
    <citation type="journal article" date="2003" name="Nature">
        <title>The male-specific region of the human Y chromosome is a mosaic of discrete sequence classes.</title>
        <authorList>
            <person name="Skaletsky H."/>
            <person name="Kuroda-Kawaguchi T."/>
            <person name="Minx P.J."/>
            <person name="Cordum H.S."/>
            <person name="Hillier L.W."/>
            <person name="Brown L.G."/>
            <person name="Repping S."/>
            <person name="Pyntikova T."/>
            <person name="Ali J."/>
            <person name="Bieri T."/>
            <person name="Chinwalla A."/>
            <person name="Delehaunty A."/>
            <person name="Delehaunty K."/>
            <person name="Du H."/>
            <person name="Fewell G."/>
            <person name="Fulton L."/>
            <person name="Fulton R."/>
            <person name="Graves T.A."/>
            <person name="Hou S.-F."/>
            <person name="Latrielle P."/>
            <person name="Leonard S."/>
            <person name="Mardis E."/>
            <person name="Maupin R."/>
            <person name="McPherson J."/>
            <person name="Miner T."/>
            <person name="Nash W."/>
            <person name="Nguyen C."/>
            <person name="Ozersky P."/>
            <person name="Pepin K."/>
            <person name="Rock S."/>
            <person name="Rohlfing T."/>
            <person name="Scott K."/>
            <person name="Schultz B."/>
            <person name="Strong C."/>
            <person name="Tin-Wollam A."/>
            <person name="Yang S.-P."/>
            <person name="Waterston R.H."/>
            <person name="Wilson R.K."/>
            <person name="Rozen S."/>
            <person name="Page D.C."/>
        </authorList>
    </citation>
    <scope>NUCLEOTIDE SEQUENCE [LARGE SCALE GENOMIC DNA]</scope>
</reference>
<reference key="5">
    <citation type="journal article" date="1999" name="Nat. Genet.">
        <title>An azoospermic man with a de novo point mutation in the Y-chromosomal gene USP9Y.</title>
        <authorList>
            <person name="Sun C."/>
            <person name="Skaletsky H."/>
            <person name="Birren B."/>
            <person name="Devon K."/>
            <person name="Tang Z."/>
            <person name="Silber S."/>
            <person name="Oates R."/>
            <person name="Page D.C."/>
        </authorList>
    </citation>
    <scope>POSSIBLE INVOLVEMENT IN SPGFY2</scope>
</reference>
<reference key="6">
    <citation type="journal article" date="2003" name="Reprod. Fertil. Dev.">
        <title>Ubiquitin-specific protease activity of USP9Y, a male infertility gene on the Y chromosome.</title>
        <authorList>
            <person name="Lee K.H."/>
            <person name="Song G.J."/>
            <person name="Kang I.S."/>
            <person name="Kim S.W."/>
            <person name="Paick J.S."/>
            <person name="Chung C.H."/>
            <person name="Rhee K."/>
        </authorList>
    </citation>
    <scope>FUNCTION</scope>
    <scope>CATALYTIC ACTIVITY</scope>
    <scope>PATHWAY</scope>
</reference>
<reference key="7">
    <citation type="journal article" date="2004" name="Genome Biol.">
        <title>An unappreciated role for RNA surveillance.</title>
        <authorList>
            <person name="Hillman R.T."/>
            <person name="Green R.E."/>
            <person name="Brenner S.E."/>
        </authorList>
    </citation>
    <scope>SPLICE ISOFORM(S) THAT ARE POTENTIAL NMD TARGET(S)</scope>
</reference>
<reference key="8">
    <citation type="journal article" date="2009" name="N. Engl. J. Med.">
        <title>Spermatogenesis in a man with complete deletion of USP9Y.</title>
        <authorList>
            <person name="Luddi A."/>
            <person name="Margollicci M."/>
            <person name="Gambera L."/>
            <person name="Serafini F."/>
            <person name="Cioni M."/>
            <person name="De Leo V."/>
            <person name="Balestri P."/>
            <person name="Piomboni P."/>
        </authorList>
    </citation>
    <scope>LACK OF INVOLVEMENT IN SPERMATOGENIC FAILURE</scope>
</reference>
<dbReference type="EC" id="3.4.19.12" evidence="6"/>
<dbReference type="EMBL" id="AF000986">
    <property type="protein sequence ID" value="AAC51833.1"/>
    <property type="molecule type" value="mRNA"/>
</dbReference>
<dbReference type="EMBL" id="Y13618">
    <property type="protein sequence ID" value="CAA73940.1"/>
    <property type="molecule type" value="mRNA"/>
</dbReference>
<dbReference type="EMBL" id="Y13619">
    <property type="protein sequence ID" value="CAA73941.1"/>
    <property type="molecule type" value="mRNA"/>
</dbReference>
<dbReference type="EMBL" id="AC002531">
    <property type="status" value="NOT_ANNOTATED_CDS"/>
    <property type="molecule type" value="Genomic_DNA"/>
</dbReference>
<dbReference type="CCDS" id="CCDS14781.1">
    <molecule id="O00507-1"/>
</dbReference>
<dbReference type="RefSeq" id="NP_004645.2">
    <molecule id="O00507-1"/>
    <property type="nucleotide sequence ID" value="NM_004654.4"/>
</dbReference>
<dbReference type="RefSeq" id="XP_047298728.1">
    <molecule id="O00507-1"/>
    <property type="nucleotide sequence ID" value="XM_047442772.1"/>
</dbReference>
<dbReference type="RefSeq" id="XP_054184353.1">
    <molecule id="O00507-1"/>
    <property type="nucleotide sequence ID" value="XM_054328378.1"/>
</dbReference>
<dbReference type="SMR" id="O00507"/>
<dbReference type="BioGRID" id="113892">
    <property type="interactions" value="79"/>
</dbReference>
<dbReference type="FunCoup" id="O00507">
    <property type="interactions" value="737"/>
</dbReference>
<dbReference type="IntAct" id="O00507">
    <property type="interactions" value="32"/>
</dbReference>
<dbReference type="MINT" id="O00507"/>
<dbReference type="STRING" id="9606.ENSP00000342812"/>
<dbReference type="MEROPS" id="C19.028"/>
<dbReference type="CarbonylDB" id="O00507"/>
<dbReference type="GlyGen" id="O00507">
    <property type="glycosylation" value="1 site, 1 O-linked glycan (1 site)"/>
</dbReference>
<dbReference type="iPTMnet" id="O00507"/>
<dbReference type="PhosphoSitePlus" id="O00507"/>
<dbReference type="SwissPalm" id="O00507"/>
<dbReference type="BioMuta" id="USP9Y"/>
<dbReference type="jPOST" id="O00507"/>
<dbReference type="MassIVE" id="O00507"/>
<dbReference type="PeptideAtlas" id="O00507"/>
<dbReference type="ProteomicsDB" id="47948">
    <molecule id="O00507-1"/>
</dbReference>
<dbReference type="ProteomicsDB" id="47949">
    <molecule id="O00507-2"/>
</dbReference>
<dbReference type="Pumba" id="O00507"/>
<dbReference type="Antibodypedia" id="21866">
    <property type="antibodies" value="37 antibodies from 15 providers"/>
</dbReference>
<dbReference type="DNASU" id="8287"/>
<dbReference type="Ensembl" id="ENST00000338981.7">
    <molecule id="O00507-1"/>
    <property type="protein sequence ID" value="ENSP00000342812.3"/>
    <property type="gene ID" value="ENSG00000114374.13"/>
</dbReference>
<dbReference type="Ensembl" id="ENST00000651177.1">
    <molecule id="O00507-1"/>
    <property type="protein sequence ID" value="ENSP00000498372.1"/>
    <property type="gene ID" value="ENSG00000114374.13"/>
</dbReference>
<dbReference type="GeneID" id="8287"/>
<dbReference type="KEGG" id="hsa:8287"/>
<dbReference type="MANE-Select" id="ENST00000338981.7">
    <property type="protein sequence ID" value="ENSP00000342812.3"/>
    <property type="RefSeq nucleotide sequence ID" value="NM_004654.4"/>
    <property type="RefSeq protein sequence ID" value="NP_004645.2"/>
</dbReference>
<dbReference type="UCSC" id="uc004fst.2">
    <molecule id="O00507-1"/>
    <property type="organism name" value="human"/>
</dbReference>
<dbReference type="AGR" id="HGNC:12633"/>
<dbReference type="CTD" id="8287"/>
<dbReference type="DisGeNET" id="8287"/>
<dbReference type="GeneCards" id="USP9Y"/>
<dbReference type="GeneReviews" id="USP9Y"/>
<dbReference type="HGNC" id="HGNC:12633">
    <property type="gene designation" value="USP9Y"/>
</dbReference>
<dbReference type="HPA" id="ENSG00000114374">
    <property type="expression patterns" value="Low tissue specificity"/>
</dbReference>
<dbReference type="MalaCards" id="USP9Y"/>
<dbReference type="MIM" id="400005">
    <property type="type" value="gene"/>
</dbReference>
<dbReference type="MIM" id="415000">
    <property type="type" value="phenotype"/>
</dbReference>
<dbReference type="neXtProt" id="NX_O00507"/>
<dbReference type="OpenTargets" id="ENSG00000114374"/>
<dbReference type="Orphanet" id="1646">
    <property type="disease" value="Chromosome Y microdeletion syndrome"/>
</dbReference>
<dbReference type="PharmGKB" id="PA37258"/>
<dbReference type="VEuPathDB" id="HostDB:ENSG00000114374"/>
<dbReference type="GeneTree" id="ENSGT00940000155375"/>
<dbReference type="HOGENOM" id="CLU_000331_1_0_1"/>
<dbReference type="InParanoid" id="O00507"/>
<dbReference type="OMA" id="CSCYMNS"/>
<dbReference type="PAN-GO" id="O00507">
    <property type="GO annotations" value="6 GO annotations based on evolutionary models"/>
</dbReference>
<dbReference type="PhylomeDB" id="O00507"/>
<dbReference type="TreeFam" id="TF323966"/>
<dbReference type="PathwayCommons" id="O00507"/>
<dbReference type="SignaLink" id="O00507"/>
<dbReference type="UniPathway" id="UPA00143"/>
<dbReference type="BioGRID-ORCS" id="8287">
    <property type="hits" value="14 hits in 774 CRISPR screens"/>
</dbReference>
<dbReference type="ChiTaRS" id="USP9Y">
    <property type="organism name" value="human"/>
</dbReference>
<dbReference type="GeneWiki" id="USP9Y"/>
<dbReference type="GenomeRNAi" id="8287"/>
<dbReference type="Pharos" id="O00507">
    <property type="development level" value="Tdark"/>
</dbReference>
<dbReference type="PRO" id="PR:O00507"/>
<dbReference type="Proteomes" id="UP000005640">
    <property type="component" value="Chromosome Y"/>
</dbReference>
<dbReference type="RNAct" id="O00507">
    <property type="molecule type" value="protein"/>
</dbReference>
<dbReference type="Bgee" id="ENSG00000114374">
    <property type="expression patterns" value="Expressed in male germ line stem cell (sensu Vertebrata) in testis and 175 other cell types or tissues"/>
</dbReference>
<dbReference type="ExpressionAtlas" id="O00507">
    <property type="expression patterns" value="baseline and differential"/>
</dbReference>
<dbReference type="GO" id="GO:0005737">
    <property type="term" value="C:cytoplasm"/>
    <property type="evidence" value="ECO:0000250"/>
    <property type="project" value="UniProtKB"/>
</dbReference>
<dbReference type="GO" id="GO:0005829">
    <property type="term" value="C:cytosol"/>
    <property type="evidence" value="ECO:0000318"/>
    <property type="project" value="GO_Central"/>
</dbReference>
<dbReference type="GO" id="GO:0005634">
    <property type="term" value="C:nucleus"/>
    <property type="evidence" value="ECO:0000318"/>
    <property type="project" value="GO_Central"/>
</dbReference>
<dbReference type="GO" id="GO:0070410">
    <property type="term" value="F:co-SMAD binding"/>
    <property type="evidence" value="ECO:0000250"/>
    <property type="project" value="BHF-UCL"/>
</dbReference>
<dbReference type="GO" id="GO:0004843">
    <property type="term" value="F:cysteine-type deubiquitinase activity"/>
    <property type="evidence" value="ECO:0000314"/>
    <property type="project" value="UniProtKB"/>
</dbReference>
<dbReference type="GO" id="GO:0008234">
    <property type="term" value="F:cysteine-type peptidase activity"/>
    <property type="evidence" value="ECO:0000304"/>
    <property type="project" value="ProtInc"/>
</dbReference>
<dbReference type="GO" id="GO:0046872">
    <property type="term" value="F:metal ion binding"/>
    <property type="evidence" value="ECO:0007669"/>
    <property type="project" value="UniProtKB-KW"/>
</dbReference>
<dbReference type="GO" id="GO:0030509">
    <property type="term" value="P:BMP signaling pathway"/>
    <property type="evidence" value="ECO:0000250"/>
    <property type="project" value="UniProtKB"/>
</dbReference>
<dbReference type="GO" id="GO:0016477">
    <property type="term" value="P:cell migration"/>
    <property type="evidence" value="ECO:0000318"/>
    <property type="project" value="GO_Central"/>
</dbReference>
<dbReference type="GO" id="GO:0016579">
    <property type="term" value="P:protein deubiquitination"/>
    <property type="evidence" value="ECO:0000250"/>
    <property type="project" value="UniProtKB"/>
</dbReference>
<dbReference type="GO" id="GO:0006508">
    <property type="term" value="P:proteolysis"/>
    <property type="evidence" value="ECO:0007669"/>
    <property type="project" value="UniProtKB-KW"/>
</dbReference>
<dbReference type="GO" id="GO:0031647">
    <property type="term" value="P:regulation of protein stability"/>
    <property type="evidence" value="ECO:0000318"/>
    <property type="project" value="GO_Central"/>
</dbReference>
<dbReference type="GO" id="GO:0007283">
    <property type="term" value="P:spermatogenesis"/>
    <property type="evidence" value="ECO:0000304"/>
    <property type="project" value="ProtInc"/>
</dbReference>
<dbReference type="GO" id="GO:0007179">
    <property type="term" value="P:transforming growth factor beta receptor signaling pathway"/>
    <property type="evidence" value="ECO:0000250"/>
    <property type="project" value="UniProtKB"/>
</dbReference>
<dbReference type="CDD" id="cd02659">
    <property type="entry name" value="peptidase_C19C"/>
    <property type="match status" value="1"/>
</dbReference>
<dbReference type="Gene3D" id="3.90.70.10">
    <property type="entry name" value="Cysteine proteinases"/>
    <property type="match status" value="1"/>
</dbReference>
<dbReference type="InterPro" id="IPR016024">
    <property type="entry name" value="ARM-type_fold"/>
</dbReference>
<dbReference type="InterPro" id="IPR056850">
    <property type="entry name" value="ARM_UBP34_24_USP9X_Y"/>
</dbReference>
<dbReference type="InterPro" id="IPR021905">
    <property type="entry name" value="DUF3517"/>
</dbReference>
<dbReference type="InterPro" id="IPR038765">
    <property type="entry name" value="Papain-like_cys_pep_sf"/>
</dbReference>
<dbReference type="InterPro" id="IPR050164">
    <property type="entry name" value="Peptidase_C19"/>
</dbReference>
<dbReference type="InterPro" id="IPR001394">
    <property type="entry name" value="Peptidase_C19_UCH"/>
</dbReference>
<dbReference type="InterPro" id="IPR055176">
    <property type="entry name" value="UBP24/USP9X/USP9Y_UBL"/>
</dbReference>
<dbReference type="InterPro" id="IPR018200">
    <property type="entry name" value="USP_CS"/>
</dbReference>
<dbReference type="InterPro" id="IPR028889">
    <property type="entry name" value="USP_dom"/>
</dbReference>
<dbReference type="PANTHER" id="PTHR24006">
    <property type="entry name" value="UBIQUITIN CARBOXYL-TERMINAL HYDROLASE"/>
    <property type="match status" value="1"/>
</dbReference>
<dbReference type="PANTHER" id="PTHR24006:SF693">
    <property type="entry name" value="UBIQUITIN CARBOXYL-TERMINAL HYDROLASE FAF-Y-RELATED"/>
    <property type="match status" value="1"/>
</dbReference>
<dbReference type="Pfam" id="PF25010">
    <property type="entry name" value="ARM_UBP24_USP9X-Y"/>
    <property type="match status" value="1"/>
</dbReference>
<dbReference type="Pfam" id="PF12030">
    <property type="entry name" value="DUF3517"/>
    <property type="match status" value="1"/>
</dbReference>
<dbReference type="Pfam" id="PF00443">
    <property type="entry name" value="UCH"/>
    <property type="match status" value="1"/>
</dbReference>
<dbReference type="Pfam" id="PF22900">
    <property type="entry name" value="UCH_UBL1"/>
    <property type="match status" value="1"/>
</dbReference>
<dbReference type="SUPFAM" id="SSF48371">
    <property type="entry name" value="ARM repeat"/>
    <property type="match status" value="1"/>
</dbReference>
<dbReference type="SUPFAM" id="SSF54001">
    <property type="entry name" value="Cysteine proteinases"/>
    <property type="match status" value="1"/>
</dbReference>
<dbReference type="PROSITE" id="PS00972">
    <property type="entry name" value="USP_1"/>
    <property type="match status" value="1"/>
</dbReference>
<dbReference type="PROSITE" id="PS00973">
    <property type="entry name" value="USP_2"/>
    <property type="match status" value="1"/>
</dbReference>
<dbReference type="PROSITE" id="PS50235">
    <property type="entry name" value="USP_3"/>
    <property type="match status" value="1"/>
</dbReference>
<name>USP9Y_HUMAN</name>
<organism>
    <name type="scientific">Homo sapiens</name>
    <name type="common">Human</name>
    <dbReference type="NCBI Taxonomy" id="9606"/>
    <lineage>
        <taxon>Eukaryota</taxon>
        <taxon>Metazoa</taxon>
        <taxon>Chordata</taxon>
        <taxon>Craniata</taxon>
        <taxon>Vertebrata</taxon>
        <taxon>Euteleostomi</taxon>
        <taxon>Mammalia</taxon>
        <taxon>Eutheria</taxon>
        <taxon>Euarchontoglires</taxon>
        <taxon>Primates</taxon>
        <taxon>Haplorrhini</taxon>
        <taxon>Catarrhini</taxon>
        <taxon>Hominidae</taxon>
        <taxon>Homo</taxon>
    </lineage>
</organism>
<accession>O00507</accession>
<accession>O14601</accession>
<comment type="function">
    <text evidence="6">Deubiquitinase that mediates deubiquitination of target proteins (PubMed:12895410). May stabilize target proteins that are important for male germ cell development (PubMed:12895410).</text>
</comment>
<comment type="catalytic activity">
    <reaction evidence="6">
        <text>Thiol-dependent hydrolysis of ester, thioester, amide, peptide and isopeptide bonds formed by the C-terminal Gly of ubiquitin (a 76-residue protein attached to proteins as an intracellular targeting signal).</text>
        <dbReference type="EC" id="3.4.19.12"/>
    </reaction>
</comment>
<comment type="pathway">
    <text evidence="6">Protein modification; protein ubiquitination.</text>
</comment>
<comment type="alternative products">
    <event type="alternative splicing"/>
    <isoform>
        <id>O00507-1</id>
        <name>Long</name>
        <sequence type="displayed"/>
    </isoform>
    <isoform>
        <id>O00507-2</id>
        <name>Short</name>
        <sequence type="described" ref="VSP_005272"/>
    </isoform>
    <text>Additional isoforms seem to exist.</text>
</comment>
<comment type="tissue specificity">
    <text evidence="8">Widely expressed in embryonic and adult tissues.</text>
</comment>
<comment type="disease">
    <text evidence="7">USP9Y is located in the 'azoospermia factor a' (AZFa) region on chromosome Y which is deleted in Sertoli cell-only syndrome. This is an infertility disorder in which no germ cells are visible in seminiferous tubules leading to azoospermia. However, AZFa deletions resulting in complete loss of USP9Y have also been found in normospermic men (PubMed:19246359).</text>
</comment>
<comment type="disease" evidence="5">
    <disease id="DI-02062">
        <name>Spermatogenic failure Y-linked 2</name>
        <acronym>SPGFY2</acronym>
        <description>A disorder resulting in the absence (azoospermia) or reduction (oligozoospermia) of sperm in the semen, leading to male infertility.</description>
        <dbReference type="MIM" id="415000"/>
    </disease>
    <text evidence="5 7">The disease may be caused by variants affecting the gene represented in this entry. The role of USP9Y in spermatogenesis failure is uncertain (PubMed:19246359). A 4-bp deletion in a splice-donor site, causing exon skipping and protein truncation has been observed in non-obstructive azoospermia (PubMed:10581029). However, complete USP9Y deletion has been detected in individuals with no spermatogenic defects (PubMed:19246359).</text>
</comment>
<comment type="miscellaneous">
    <molecule>Isoform Short</molecule>
    <text evidence="12">May be produced at very low levels due to a premature stop codon in the mRNA, leading to nonsense-mediated mRNA decay.</text>
</comment>
<comment type="similarity">
    <text evidence="11">Belongs to the peptidase C19 family.</text>
</comment>
<proteinExistence type="evidence at protein level"/>
<sequence length="2555" mass="291077">MTAITHGSPVGGNDSQGQVLDGQSQHLFQQNQTSSPDSSNENSVATPPPEEQGQGDAPPQHEDEEPAFPHTELANLDDMINRPRWVVPVLPKGELEVLLEAAIDLSVKGLDVKSEACQRFFRDGLTISFTKILMDEAVSGWKFEIHRCIINNTHRLVELCVAKLSQDWFPLLELLAMALNPHCKFHIYNGTRPCELISSNAQLPEDELFARSSDPRSPKGWLVDLINKFGTLNGFQILHDRFFNGSALNIQIIAALIKPFGQCYEFLSQHTLKKYFIPVIEIVPHLLENLTDEELKKEAKNEAKNDALSMIIKSLKNLASRISGQDETIKNLEIFRLKMILRLLQISSFNGKMNALNEINKVISSVSYYTHRHSNPEEEEWLTAERMAEWIQQNNILSIVLQDSLHQPQYVEKLEKILRFVIKEKALTLQDLDNIWAAQAGKHEAIVKNVHDLLAKLAWDFSPGQLDHLFDCFKASWTNASKKQREKLLELIRRLAEDDKDGVMAHKVLNLLWNLAQSDDVPVDIMDLALSAHIKILDYSCSQDRDAQKIQWIDHFIEELRTNDKWVIPALKQIREICSLFGEASQNLSQTQRSPHIFYRHDLINQLQQNHALVTLVAENLATYMNSIRLYAGDHEDYDPQTVRLGSRYSHVQEVQERLNFLRFLLKDGQLWLCAPQAKQIWKCLAENAVYLCDREACFKWYSKLMGDEPDLDPDINKDFFESNVLQLDPSLLTENGMKCFERFFKAVNCRERKLIAKRRSYMMDDLELIGLDYLWRVVIQSSDEIANRAIDLLKEIYTNLGPRLKANQVVIHEDFIQSCFDRLKASYDTLCVFDGDKNSINCARQEAIRMVRVLTVIKEYINECDSDYHKERMILPMSRAFRGKHLSLIVRFPNQGRQVDELDIWSHTNDTIGSVRRCIVNRIKANVAHKKIELFVGGELIDSEDDRKLIGQLNLKDKSLITAKLTQINFNMPSSPDSSSDSSTASPGNHRNHYNDGPNLEVESCLPGVIMSVHPRYISFLWQVADLGSNLNMPPLRDGARVLMKLMPPDRTAVEKLRAVCLDHAKLGEGKLSPPLDSLFFGPSASQVLYLTEVVYALLMPAGVPLTDGSSDFQVHFLKSGGLPLVLSMLIRNNFLPNTDMETRRGAYLNALKIAKLLLTAIGYGHVRAVAEACQPVVDGTDPITQINQVTHDQAVVLQSALQSIPNPSSECVLRNESILLAQEISNEASRYMPDICVIRAIQKIIWASACGALGLVFSPNEEITKIYQMTTNGSNKLEVEDEQVCCEALEVMTLCFALLPTALDALSKEKAWQTFIIDLLLHCPSKTVRQLAQEQFFLMCTRCCMGHRPLLFFITLLFTILGSTAREKGKYSGDYFTLLRHLLNYAYNGNINIPNAEVLLVSEIDWLKRIRDNVKNTGETGVEEPILEGHLGVTKELLAFQTSEKKYHFGCEKGGANLIKELIDDFIFPASKVYLQYLRSGELPAEQAIPVCSSPVTINAGFELLVALAIGCVRNLKQIVDCLTEMYYMGTAITTCEALTEWEYLPPVGPRPPKGFVGLKNAGATCYMNSVIQQLYMIPSIRNSILAIEGTGSDLHDDMFGDEKQDSESNVDPRDDVFGYPHQFEDKPALSKTEDRKEYNIGVLRHLQVIFGHLAASQLQYYVPRGFWKQFRLWGEPVNLREQHDALEFFNSLVDSLDEALKALGHPAILSKVLGGSFADQKICQGCPHRYECEESFTTLNVDIRNHQNLLDSLEQYIKGDLLEGANAYHCEKCDKKVDTVKRLLIKKLPRVLAIQLKRFDYDWERECAIKFNDYFEFPRELDMGPYTVAGVANLERDNVNSENELIEQKEQSDNETAGGTKYRLVGVLVHSGQASGGHYYSYIIQRNGKDDQTDHWYKFDDGDVTECKMDDDEEMKNQCFGGEYMGEVFDHMMKRMSYRRQKRWWNAYILFYEQMDMIDEDDEMIRYISELTIARPHQIIMSPAIERSVRKQNVKFMHNRLQYSLEYFQFVKKLLTCNGVYLNPAPGQDYLLPEAEEITMISIQLAARFLFTTGFHTKKIVRGPASDWYDALCVLLRHSKNVRFWFTHNVLFNVSNRFSEYLLECPSAEVRGAFAKLIVFIAHFSLQDGSCPSPFASPGPSSQACDNLSLSDHLLRATLNLLRREVSEHGHHLQQYFNLFVMYANLGVAEKTQLLKLNVPATFMLVSLDEGPGPPIKYQYAELGKLYSVVSQLIRCCNVSSTMQSSINGNPPLPNPFGDLNLSQPIMPIQQNVLDILFVRTSYVKKIIEDCSNSEDTIKLLRFCSWENPQFSSTVLSELLWQVAYSYTYELRPYLDLLFQILLIEDSWQTHRIHNALKGIPDDRDGLFDTIQRSKNHYQKRAYQCIKCMVALFSSCPVAYQILQGNGDLKRKWTWAVEWLGDELERRPYTGNPQYSYNNWSPPVQSNETANGYFLERSHSARMTLAKACELCPEEEPDDQDAPDEHEPSPSEDAPLYPHSPASQYQQNNHVHGQPYTGPAAHHLNNPQKTGQRTQENYEGNEEVSSPQMKDQ</sequence>